<proteinExistence type="inferred from homology"/>
<gene>
    <name evidence="1" type="primary">hisH</name>
    <name type="ordered locus">LIC_10113</name>
</gene>
<evidence type="ECO:0000255" key="1">
    <source>
        <dbReference type="HAMAP-Rule" id="MF_00278"/>
    </source>
</evidence>
<dbReference type="EC" id="4.3.2.10" evidence="1"/>
<dbReference type="EC" id="3.5.1.2" evidence="1"/>
<dbReference type="EMBL" id="AE016823">
    <property type="protein sequence ID" value="AAS68746.1"/>
    <property type="molecule type" value="Genomic_DNA"/>
</dbReference>
<dbReference type="RefSeq" id="WP_000560473.1">
    <property type="nucleotide sequence ID" value="NC_005823.1"/>
</dbReference>
<dbReference type="SMR" id="P61780"/>
<dbReference type="GeneID" id="61143468"/>
<dbReference type="KEGG" id="lic:LIC_10113"/>
<dbReference type="HOGENOM" id="CLU_071837_2_2_12"/>
<dbReference type="UniPathway" id="UPA00031">
    <property type="reaction ID" value="UER00010"/>
</dbReference>
<dbReference type="Proteomes" id="UP000007037">
    <property type="component" value="Chromosome I"/>
</dbReference>
<dbReference type="GO" id="GO:0005737">
    <property type="term" value="C:cytoplasm"/>
    <property type="evidence" value="ECO:0007669"/>
    <property type="project" value="UniProtKB-SubCell"/>
</dbReference>
<dbReference type="GO" id="GO:0004359">
    <property type="term" value="F:glutaminase activity"/>
    <property type="evidence" value="ECO:0007669"/>
    <property type="project" value="UniProtKB-EC"/>
</dbReference>
<dbReference type="GO" id="GO:0000107">
    <property type="term" value="F:imidazoleglycerol-phosphate synthase activity"/>
    <property type="evidence" value="ECO:0007669"/>
    <property type="project" value="UniProtKB-UniRule"/>
</dbReference>
<dbReference type="GO" id="GO:0016829">
    <property type="term" value="F:lyase activity"/>
    <property type="evidence" value="ECO:0007669"/>
    <property type="project" value="UniProtKB-KW"/>
</dbReference>
<dbReference type="GO" id="GO:0000105">
    <property type="term" value="P:L-histidine biosynthetic process"/>
    <property type="evidence" value="ECO:0007669"/>
    <property type="project" value="UniProtKB-UniRule"/>
</dbReference>
<dbReference type="CDD" id="cd01748">
    <property type="entry name" value="GATase1_IGP_Synthase"/>
    <property type="match status" value="1"/>
</dbReference>
<dbReference type="FunFam" id="3.40.50.880:FF:000083">
    <property type="entry name" value="Imidazole glycerol phosphate synthase subunit HisH"/>
    <property type="match status" value="1"/>
</dbReference>
<dbReference type="Gene3D" id="3.40.50.880">
    <property type="match status" value="1"/>
</dbReference>
<dbReference type="HAMAP" id="MF_00278">
    <property type="entry name" value="HisH"/>
    <property type="match status" value="1"/>
</dbReference>
<dbReference type="InterPro" id="IPR029062">
    <property type="entry name" value="Class_I_gatase-like"/>
</dbReference>
<dbReference type="InterPro" id="IPR017926">
    <property type="entry name" value="GATASE"/>
</dbReference>
<dbReference type="InterPro" id="IPR010139">
    <property type="entry name" value="Imidazole-glycPsynth_HisH"/>
</dbReference>
<dbReference type="NCBIfam" id="TIGR01855">
    <property type="entry name" value="IMP_synth_hisH"/>
    <property type="match status" value="1"/>
</dbReference>
<dbReference type="NCBIfam" id="NF010608">
    <property type="entry name" value="PRK14004.1"/>
    <property type="match status" value="1"/>
</dbReference>
<dbReference type="PANTHER" id="PTHR42701">
    <property type="entry name" value="IMIDAZOLE GLYCEROL PHOSPHATE SYNTHASE SUBUNIT HISH"/>
    <property type="match status" value="1"/>
</dbReference>
<dbReference type="PANTHER" id="PTHR42701:SF1">
    <property type="entry name" value="IMIDAZOLE GLYCEROL PHOSPHATE SYNTHASE SUBUNIT HISH"/>
    <property type="match status" value="1"/>
</dbReference>
<dbReference type="Pfam" id="PF00117">
    <property type="entry name" value="GATase"/>
    <property type="match status" value="1"/>
</dbReference>
<dbReference type="PIRSF" id="PIRSF000495">
    <property type="entry name" value="Amidotransf_hisH"/>
    <property type="match status" value="1"/>
</dbReference>
<dbReference type="SUPFAM" id="SSF52317">
    <property type="entry name" value="Class I glutamine amidotransferase-like"/>
    <property type="match status" value="1"/>
</dbReference>
<dbReference type="PROSITE" id="PS51273">
    <property type="entry name" value="GATASE_TYPE_1"/>
    <property type="match status" value="1"/>
</dbReference>
<comment type="function">
    <text evidence="1">IGPS catalyzes the conversion of PRFAR and glutamine to IGP, AICAR and glutamate. The HisH subunit catalyzes the hydrolysis of glutamine to glutamate and ammonia as part of the synthesis of IGP and AICAR. The resulting ammonia molecule is channeled to the active site of HisF.</text>
</comment>
<comment type="catalytic activity">
    <reaction evidence="1">
        <text>5-[(5-phospho-1-deoxy-D-ribulos-1-ylimino)methylamino]-1-(5-phospho-beta-D-ribosyl)imidazole-4-carboxamide + L-glutamine = D-erythro-1-(imidazol-4-yl)glycerol 3-phosphate + 5-amino-1-(5-phospho-beta-D-ribosyl)imidazole-4-carboxamide + L-glutamate + H(+)</text>
        <dbReference type="Rhea" id="RHEA:24793"/>
        <dbReference type="ChEBI" id="CHEBI:15378"/>
        <dbReference type="ChEBI" id="CHEBI:29985"/>
        <dbReference type="ChEBI" id="CHEBI:58278"/>
        <dbReference type="ChEBI" id="CHEBI:58359"/>
        <dbReference type="ChEBI" id="CHEBI:58475"/>
        <dbReference type="ChEBI" id="CHEBI:58525"/>
        <dbReference type="EC" id="4.3.2.10"/>
    </reaction>
</comment>
<comment type="catalytic activity">
    <reaction evidence="1">
        <text>L-glutamine + H2O = L-glutamate + NH4(+)</text>
        <dbReference type="Rhea" id="RHEA:15889"/>
        <dbReference type="ChEBI" id="CHEBI:15377"/>
        <dbReference type="ChEBI" id="CHEBI:28938"/>
        <dbReference type="ChEBI" id="CHEBI:29985"/>
        <dbReference type="ChEBI" id="CHEBI:58359"/>
        <dbReference type="EC" id="3.5.1.2"/>
    </reaction>
</comment>
<comment type="pathway">
    <text evidence="1">Amino-acid biosynthesis; L-histidine biosynthesis; L-histidine from 5-phospho-alpha-D-ribose 1-diphosphate: step 5/9.</text>
</comment>
<comment type="subunit">
    <text evidence="1">Heterodimer of HisH and HisF.</text>
</comment>
<comment type="subcellular location">
    <subcellularLocation>
        <location evidence="1">Cytoplasm</location>
    </subcellularLocation>
</comment>
<accession>P61780</accession>
<protein>
    <recommendedName>
        <fullName evidence="1">Imidazole glycerol phosphate synthase subunit HisH</fullName>
        <ecNumber evidence="1">4.3.2.10</ecNumber>
    </recommendedName>
    <alternativeName>
        <fullName evidence="1">IGP synthase glutaminase subunit</fullName>
        <ecNumber evidence="1">3.5.1.2</ecNumber>
    </alternativeName>
    <alternativeName>
        <fullName evidence="1">IGP synthase subunit HisH</fullName>
    </alternativeName>
    <alternativeName>
        <fullName evidence="1">ImGP synthase subunit HisH</fullName>
        <shortName evidence="1">IGPS subunit HisH</shortName>
    </alternativeName>
</protein>
<feature type="chain" id="PRO_0000152386" description="Imidazole glycerol phosphate synthase subunit HisH">
    <location>
        <begin position="1"/>
        <end position="210"/>
    </location>
</feature>
<feature type="domain" description="Glutamine amidotransferase type-1" evidence="1">
    <location>
        <begin position="1"/>
        <end position="210"/>
    </location>
</feature>
<feature type="active site" description="Nucleophile" evidence="1">
    <location>
        <position position="79"/>
    </location>
</feature>
<feature type="active site" evidence="1">
    <location>
        <position position="191"/>
    </location>
</feature>
<feature type="active site" evidence="1">
    <location>
        <position position="193"/>
    </location>
</feature>
<name>HIS5_LEPIC</name>
<reference key="1">
    <citation type="journal article" date="2004" name="J. Bacteriol.">
        <title>Comparative genomics of two Leptospira interrogans serovars reveals novel insights into physiology and pathogenesis.</title>
        <authorList>
            <person name="Nascimento A.L.T.O."/>
            <person name="Ko A.I."/>
            <person name="Martins E.A.L."/>
            <person name="Monteiro-Vitorello C.B."/>
            <person name="Ho P.L."/>
            <person name="Haake D.A."/>
            <person name="Verjovski-Almeida S."/>
            <person name="Hartskeerl R.A."/>
            <person name="Marques M.V."/>
            <person name="Oliveira M.C."/>
            <person name="Menck C.F.M."/>
            <person name="Leite L.C.C."/>
            <person name="Carrer H."/>
            <person name="Coutinho L.L."/>
            <person name="Degrave W.M."/>
            <person name="Dellagostin O.A."/>
            <person name="El-Dorry H."/>
            <person name="Ferro E.S."/>
            <person name="Ferro M.I.T."/>
            <person name="Furlan L.R."/>
            <person name="Gamberini M."/>
            <person name="Giglioti E.A."/>
            <person name="Goes-Neto A."/>
            <person name="Goldman G.H."/>
            <person name="Goldman M.H.S."/>
            <person name="Harakava R."/>
            <person name="Jeronimo S.M.B."/>
            <person name="Junqueira-de-Azevedo I.L.M."/>
            <person name="Kimura E.T."/>
            <person name="Kuramae E.E."/>
            <person name="Lemos E.G.M."/>
            <person name="Lemos M.V.F."/>
            <person name="Marino C.L."/>
            <person name="Nunes L.R."/>
            <person name="de Oliveira R.C."/>
            <person name="Pereira G.G."/>
            <person name="Reis M.S."/>
            <person name="Schriefer A."/>
            <person name="Siqueira W.J."/>
            <person name="Sommer P."/>
            <person name="Tsai S.M."/>
            <person name="Simpson A.J.G."/>
            <person name="Ferro J.A."/>
            <person name="Camargo L.E.A."/>
            <person name="Kitajima J.P."/>
            <person name="Setubal J.C."/>
            <person name="Van Sluys M.A."/>
        </authorList>
    </citation>
    <scope>NUCLEOTIDE SEQUENCE [LARGE SCALE GENOMIC DNA]</scope>
    <source>
        <strain>Fiocruz L1-130</strain>
    </source>
</reference>
<sequence>MIAILDYGMGNIHSCLKAVSLYTKDFVFTKDHSTIENSKALILPGDGHFDKAMENLNSTGLRKTIDKHVTSGKPLFGICIGFQILFESSEEIAQGSKKEQIEGLGYIKGKIKKFHGKDFKVPHIGWNRLQIRRKDKSVLLKGIGDQSFFYFIHSYRPTDAEGNAITGLCDYYQEKFPAVVEKNNIFGTQFHPEKSHTHGLKLLENFIRFI</sequence>
<keyword id="KW-0028">Amino-acid biosynthesis</keyword>
<keyword id="KW-0963">Cytoplasm</keyword>
<keyword id="KW-0315">Glutamine amidotransferase</keyword>
<keyword id="KW-0368">Histidine biosynthesis</keyword>
<keyword id="KW-0378">Hydrolase</keyword>
<keyword id="KW-0456">Lyase</keyword>
<organism>
    <name type="scientific">Leptospira interrogans serogroup Icterohaemorrhagiae serovar copenhageni (strain Fiocruz L1-130)</name>
    <dbReference type="NCBI Taxonomy" id="267671"/>
    <lineage>
        <taxon>Bacteria</taxon>
        <taxon>Pseudomonadati</taxon>
        <taxon>Spirochaetota</taxon>
        <taxon>Spirochaetia</taxon>
        <taxon>Leptospirales</taxon>
        <taxon>Leptospiraceae</taxon>
        <taxon>Leptospira</taxon>
    </lineage>
</organism>